<dbReference type="EMBL" id="CP000903">
    <property type="protein sequence ID" value="ABY41386.1"/>
    <property type="molecule type" value="Genomic_DNA"/>
</dbReference>
<dbReference type="RefSeq" id="WP_002091528.1">
    <property type="nucleotide sequence ID" value="NZ_CAKMRX030000129.1"/>
</dbReference>
<dbReference type="SMR" id="A9VP89"/>
<dbReference type="GeneID" id="87590717"/>
<dbReference type="KEGG" id="bwe:BcerKBAB4_0117"/>
<dbReference type="eggNOG" id="COG0094">
    <property type="taxonomic scope" value="Bacteria"/>
</dbReference>
<dbReference type="HOGENOM" id="CLU_061015_2_1_9"/>
<dbReference type="Proteomes" id="UP000002154">
    <property type="component" value="Chromosome"/>
</dbReference>
<dbReference type="GO" id="GO:1990904">
    <property type="term" value="C:ribonucleoprotein complex"/>
    <property type="evidence" value="ECO:0007669"/>
    <property type="project" value="UniProtKB-KW"/>
</dbReference>
<dbReference type="GO" id="GO:0005840">
    <property type="term" value="C:ribosome"/>
    <property type="evidence" value="ECO:0007669"/>
    <property type="project" value="UniProtKB-KW"/>
</dbReference>
<dbReference type="GO" id="GO:0019843">
    <property type="term" value="F:rRNA binding"/>
    <property type="evidence" value="ECO:0007669"/>
    <property type="project" value="UniProtKB-UniRule"/>
</dbReference>
<dbReference type="GO" id="GO:0003735">
    <property type="term" value="F:structural constituent of ribosome"/>
    <property type="evidence" value="ECO:0007669"/>
    <property type="project" value="InterPro"/>
</dbReference>
<dbReference type="GO" id="GO:0000049">
    <property type="term" value="F:tRNA binding"/>
    <property type="evidence" value="ECO:0007669"/>
    <property type="project" value="UniProtKB-UniRule"/>
</dbReference>
<dbReference type="GO" id="GO:0006412">
    <property type="term" value="P:translation"/>
    <property type="evidence" value="ECO:0007669"/>
    <property type="project" value="UniProtKB-UniRule"/>
</dbReference>
<dbReference type="FunFam" id="3.30.1440.10:FF:000001">
    <property type="entry name" value="50S ribosomal protein L5"/>
    <property type="match status" value="1"/>
</dbReference>
<dbReference type="Gene3D" id="3.30.1440.10">
    <property type="match status" value="1"/>
</dbReference>
<dbReference type="HAMAP" id="MF_01333_B">
    <property type="entry name" value="Ribosomal_uL5_B"/>
    <property type="match status" value="1"/>
</dbReference>
<dbReference type="InterPro" id="IPR002132">
    <property type="entry name" value="Ribosomal_uL5"/>
</dbReference>
<dbReference type="InterPro" id="IPR020930">
    <property type="entry name" value="Ribosomal_uL5_bac-type"/>
</dbReference>
<dbReference type="InterPro" id="IPR031309">
    <property type="entry name" value="Ribosomal_uL5_C"/>
</dbReference>
<dbReference type="InterPro" id="IPR020929">
    <property type="entry name" value="Ribosomal_uL5_CS"/>
</dbReference>
<dbReference type="InterPro" id="IPR022803">
    <property type="entry name" value="Ribosomal_uL5_dom_sf"/>
</dbReference>
<dbReference type="InterPro" id="IPR031310">
    <property type="entry name" value="Ribosomal_uL5_N"/>
</dbReference>
<dbReference type="NCBIfam" id="NF000585">
    <property type="entry name" value="PRK00010.1"/>
    <property type="match status" value="1"/>
</dbReference>
<dbReference type="PANTHER" id="PTHR11994">
    <property type="entry name" value="60S RIBOSOMAL PROTEIN L11-RELATED"/>
    <property type="match status" value="1"/>
</dbReference>
<dbReference type="Pfam" id="PF00281">
    <property type="entry name" value="Ribosomal_L5"/>
    <property type="match status" value="1"/>
</dbReference>
<dbReference type="Pfam" id="PF00673">
    <property type="entry name" value="Ribosomal_L5_C"/>
    <property type="match status" value="1"/>
</dbReference>
<dbReference type="PIRSF" id="PIRSF002161">
    <property type="entry name" value="Ribosomal_L5"/>
    <property type="match status" value="1"/>
</dbReference>
<dbReference type="SUPFAM" id="SSF55282">
    <property type="entry name" value="RL5-like"/>
    <property type="match status" value="1"/>
</dbReference>
<dbReference type="PROSITE" id="PS00358">
    <property type="entry name" value="RIBOSOMAL_L5"/>
    <property type="match status" value="1"/>
</dbReference>
<sequence>MNRLKEKFQKEITPALMSKFNYKSVMEVPKIEKIVINTGVGDAVSNSKALDNAVEELTQIAGQKPVVTRAKKSIAGFRLREGMPIGAKVTLRGQQMYEFFDKLVSVSLPRVRDFRGVSKKSFDGRGNYTLGVKEQLIFPEIDYDKVSKVRGMDIVIVTTAKTDEEARELLTQFGMPFQK</sequence>
<proteinExistence type="inferred from homology"/>
<comment type="function">
    <text evidence="1">This is one of the proteins that bind and probably mediate the attachment of the 5S RNA into the large ribosomal subunit, where it forms part of the central protuberance. In the 70S ribosome it contacts protein S13 of the 30S subunit (bridge B1b), connecting the 2 subunits; this bridge is implicated in subunit movement. Contacts the P site tRNA; the 5S rRNA and some of its associated proteins might help stabilize positioning of ribosome-bound tRNAs.</text>
</comment>
<comment type="subunit">
    <text evidence="1">Part of the 50S ribosomal subunit; part of the 5S rRNA/L5/L18/L25 subcomplex. Contacts the 5S rRNA and the P site tRNA. Forms a bridge to the 30S subunit in the 70S ribosome.</text>
</comment>
<comment type="similarity">
    <text evidence="1">Belongs to the universal ribosomal protein uL5 family.</text>
</comment>
<name>RL5_BACMK</name>
<protein>
    <recommendedName>
        <fullName evidence="1">Large ribosomal subunit protein uL5</fullName>
    </recommendedName>
    <alternativeName>
        <fullName evidence="2">50S ribosomal protein L5</fullName>
    </alternativeName>
</protein>
<evidence type="ECO:0000255" key="1">
    <source>
        <dbReference type="HAMAP-Rule" id="MF_01333"/>
    </source>
</evidence>
<evidence type="ECO:0000305" key="2"/>
<accession>A9VP89</accession>
<organism>
    <name type="scientific">Bacillus mycoides (strain KBAB4)</name>
    <name type="common">Bacillus weihenstephanensis</name>
    <dbReference type="NCBI Taxonomy" id="315730"/>
    <lineage>
        <taxon>Bacteria</taxon>
        <taxon>Bacillati</taxon>
        <taxon>Bacillota</taxon>
        <taxon>Bacilli</taxon>
        <taxon>Bacillales</taxon>
        <taxon>Bacillaceae</taxon>
        <taxon>Bacillus</taxon>
        <taxon>Bacillus cereus group</taxon>
    </lineage>
</organism>
<reference key="1">
    <citation type="journal article" date="2008" name="Chem. Biol. Interact.">
        <title>Extending the Bacillus cereus group genomics to putative food-borne pathogens of different toxicity.</title>
        <authorList>
            <person name="Lapidus A."/>
            <person name="Goltsman E."/>
            <person name="Auger S."/>
            <person name="Galleron N."/>
            <person name="Segurens B."/>
            <person name="Dossat C."/>
            <person name="Land M.L."/>
            <person name="Broussolle V."/>
            <person name="Brillard J."/>
            <person name="Guinebretiere M.-H."/>
            <person name="Sanchis V."/>
            <person name="Nguen-the C."/>
            <person name="Lereclus D."/>
            <person name="Richardson P."/>
            <person name="Wincker P."/>
            <person name="Weissenbach J."/>
            <person name="Ehrlich S.D."/>
            <person name="Sorokin A."/>
        </authorList>
    </citation>
    <scope>NUCLEOTIDE SEQUENCE [LARGE SCALE GENOMIC DNA]</scope>
    <source>
        <strain>KBAB4</strain>
    </source>
</reference>
<gene>
    <name evidence="1" type="primary">rplE</name>
    <name type="ordered locus">BcerKBAB4_0117</name>
</gene>
<keyword id="KW-0687">Ribonucleoprotein</keyword>
<keyword id="KW-0689">Ribosomal protein</keyword>
<keyword id="KW-0694">RNA-binding</keyword>
<keyword id="KW-0699">rRNA-binding</keyword>
<keyword id="KW-0820">tRNA-binding</keyword>
<feature type="chain" id="PRO_1000142355" description="Large ribosomal subunit protein uL5">
    <location>
        <begin position="1"/>
        <end position="179"/>
    </location>
</feature>